<name>FOLD_SHESH</name>
<proteinExistence type="inferred from homology"/>
<keyword id="KW-0028">Amino-acid biosynthesis</keyword>
<keyword id="KW-0368">Histidine biosynthesis</keyword>
<keyword id="KW-0378">Hydrolase</keyword>
<keyword id="KW-0486">Methionine biosynthesis</keyword>
<keyword id="KW-0511">Multifunctional enzyme</keyword>
<keyword id="KW-0521">NADP</keyword>
<keyword id="KW-0554">One-carbon metabolism</keyword>
<keyword id="KW-0560">Oxidoreductase</keyword>
<keyword id="KW-0658">Purine biosynthesis</keyword>
<keyword id="KW-1185">Reference proteome</keyword>
<dbReference type="EC" id="1.5.1.5" evidence="1"/>
<dbReference type="EC" id="3.5.4.9" evidence="1"/>
<dbReference type="EMBL" id="CP000821">
    <property type="protein sequence ID" value="ABV36150.1"/>
    <property type="molecule type" value="Genomic_DNA"/>
</dbReference>
<dbReference type="RefSeq" id="WP_012141886.1">
    <property type="nucleotide sequence ID" value="NC_009831.1"/>
</dbReference>
<dbReference type="SMR" id="A8FTH7"/>
<dbReference type="STRING" id="425104.Ssed_1539"/>
<dbReference type="KEGG" id="sse:Ssed_1539"/>
<dbReference type="eggNOG" id="COG0190">
    <property type="taxonomic scope" value="Bacteria"/>
</dbReference>
<dbReference type="HOGENOM" id="CLU_034045_2_1_6"/>
<dbReference type="OrthoDB" id="9803580at2"/>
<dbReference type="UniPathway" id="UPA00193"/>
<dbReference type="Proteomes" id="UP000002015">
    <property type="component" value="Chromosome"/>
</dbReference>
<dbReference type="GO" id="GO:0005829">
    <property type="term" value="C:cytosol"/>
    <property type="evidence" value="ECO:0007669"/>
    <property type="project" value="TreeGrafter"/>
</dbReference>
<dbReference type="GO" id="GO:0004477">
    <property type="term" value="F:methenyltetrahydrofolate cyclohydrolase activity"/>
    <property type="evidence" value="ECO:0007669"/>
    <property type="project" value="UniProtKB-UniRule"/>
</dbReference>
<dbReference type="GO" id="GO:0004488">
    <property type="term" value="F:methylenetetrahydrofolate dehydrogenase (NADP+) activity"/>
    <property type="evidence" value="ECO:0007669"/>
    <property type="project" value="UniProtKB-UniRule"/>
</dbReference>
<dbReference type="GO" id="GO:0000105">
    <property type="term" value="P:L-histidine biosynthetic process"/>
    <property type="evidence" value="ECO:0007669"/>
    <property type="project" value="UniProtKB-KW"/>
</dbReference>
<dbReference type="GO" id="GO:0009086">
    <property type="term" value="P:methionine biosynthetic process"/>
    <property type="evidence" value="ECO:0007669"/>
    <property type="project" value="UniProtKB-KW"/>
</dbReference>
<dbReference type="GO" id="GO:0006164">
    <property type="term" value="P:purine nucleotide biosynthetic process"/>
    <property type="evidence" value="ECO:0007669"/>
    <property type="project" value="UniProtKB-KW"/>
</dbReference>
<dbReference type="GO" id="GO:0035999">
    <property type="term" value="P:tetrahydrofolate interconversion"/>
    <property type="evidence" value="ECO:0007669"/>
    <property type="project" value="UniProtKB-UniRule"/>
</dbReference>
<dbReference type="CDD" id="cd01080">
    <property type="entry name" value="NAD_bind_m-THF_DH_Cyclohyd"/>
    <property type="match status" value="1"/>
</dbReference>
<dbReference type="FunFam" id="3.40.50.10860:FF:000001">
    <property type="entry name" value="Bifunctional protein FolD"/>
    <property type="match status" value="1"/>
</dbReference>
<dbReference type="FunFam" id="3.40.50.720:FF:000006">
    <property type="entry name" value="Bifunctional protein FolD"/>
    <property type="match status" value="1"/>
</dbReference>
<dbReference type="Gene3D" id="3.40.50.10860">
    <property type="entry name" value="Leucine Dehydrogenase, chain A, domain 1"/>
    <property type="match status" value="1"/>
</dbReference>
<dbReference type="Gene3D" id="3.40.50.720">
    <property type="entry name" value="NAD(P)-binding Rossmann-like Domain"/>
    <property type="match status" value="1"/>
</dbReference>
<dbReference type="HAMAP" id="MF_01576">
    <property type="entry name" value="THF_DHG_CYH"/>
    <property type="match status" value="1"/>
</dbReference>
<dbReference type="InterPro" id="IPR046346">
    <property type="entry name" value="Aminoacid_DH-like_N_sf"/>
</dbReference>
<dbReference type="InterPro" id="IPR036291">
    <property type="entry name" value="NAD(P)-bd_dom_sf"/>
</dbReference>
<dbReference type="InterPro" id="IPR000672">
    <property type="entry name" value="THF_DH/CycHdrlase"/>
</dbReference>
<dbReference type="InterPro" id="IPR020630">
    <property type="entry name" value="THF_DH/CycHdrlase_cat_dom"/>
</dbReference>
<dbReference type="InterPro" id="IPR020867">
    <property type="entry name" value="THF_DH/CycHdrlase_CS"/>
</dbReference>
<dbReference type="InterPro" id="IPR020631">
    <property type="entry name" value="THF_DH/CycHdrlase_NAD-bd_dom"/>
</dbReference>
<dbReference type="NCBIfam" id="NF008058">
    <property type="entry name" value="PRK10792.1"/>
    <property type="match status" value="1"/>
</dbReference>
<dbReference type="NCBIfam" id="NF010783">
    <property type="entry name" value="PRK14186.1"/>
    <property type="match status" value="1"/>
</dbReference>
<dbReference type="PANTHER" id="PTHR48099:SF5">
    <property type="entry name" value="C-1-TETRAHYDROFOLATE SYNTHASE, CYTOPLASMIC"/>
    <property type="match status" value="1"/>
</dbReference>
<dbReference type="PANTHER" id="PTHR48099">
    <property type="entry name" value="C-1-TETRAHYDROFOLATE SYNTHASE, CYTOPLASMIC-RELATED"/>
    <property type="match status" value="1"/>
</dbReference>
<dbReference type="Pfam" id="PF00763">
    <property type="entry name" value="THF_DHG_CYH"/>
    <property type="match status" value="1"/>
</dbReference>
<dbReference type="Pfam" id="PF02882">
    <property type="entry name" value="THF_DHG_CYH_C"/>
    <property type="match status" value="1"/>
</dbReference>
<dbReference type="PRINTS" id="PR00085">
    <property type="entry name" value="THFDHDRGNASE"/>
</dbReference>
<dbReference type="SUPFAM" id="SSF53223">
    <property type="entry name" value="Aminoacid dehydrogenase-like, N-terminal domain"/>
    <property type="match status" value="1"/>
</dbReference>
<dbReference type="SUPFAM" id="SSF51735">
    <property type="entry name" value="NAD(P)-binding Rossmann-fold domains"/>
    <property type="match status" value="1"/>
</dbReference>
<dbReference type="PROSITE" id="PS00767">
    <property type="entry name" value="THF_DHG_CYH_2"/>
    <property type="match status" value="1"/>
</dbReference>
<feature type="chain" id="PRO_1000087920" description="Bifunctional protein FolD">
    <location>
        <begin position="1"/>
        <end position="284"/>
    </location>
</feature>
<feature type="binding site" evidence="1">
    <location>
        <begin position="166"/>
        <end position="168"/>
    </location>
    <ligand>
        <name>NADP(+)</name>
        <dbReference type="ChEBI" id="CHEBI:58349"/>
    </ligand>
</feature>
<feature type="binding site" evidence="1">
    <location>
        <position position="232"/>
    </location>
    <ligand>
        <name>NADP(+)</name>
        <dbReference type="ChEBI" id="CHEBI:58349"/>
    </ligand>
</feature>
<evidence type="ECO:0000255" key="1">
    <source>
        <dbReference type="HAMAP-Rule" id="MF_01576"/>
    </source>
</evidence>
<organism>
    <name type="scientific">Shewanella sediminis (strain HAW-EB3)</name>
    <dbReference type="NCBI Taxonomy" id="425104"/>
    <lineage>
        <taxon>Bacteria</taxon>
        <taxon>Pseudomonadati</taxon>
        <taxon>Pseudomonadota</taxon>
        <taxon>Gammaproteobacteria</taxon>
        <taxon>Alteromonadales</taxon>
        <taxon>Shewanellaceae</taxon>
        <taxon>Shewanella</taxon>
    </lineage>
</organism>
<accession>A8FTH7</accession>
<reference key="1">
    <citation type="submission" date="2007-08" db="EMBL/GenBank/DDBJ databases">
        <title>Complete sequence of Shewanella sediminis HAW-EB3.</title>
        <authorList>
            <consortium name="US DOE Joint Genome Institute"/>
            <person name="Copeland A."/>
            <person name="Lucas S."/>
            <person name="Lapidus A."/>
            <person name="Barry K."/>
            <person name="Glavina del Rio T."/>
            <person name="Dalin E."/>
            <person name="Tice H."/>
            <person name="Pitluck S."/>
            <person name="Chertkov O."/>
            <person name="Brettin T."/>
            <person name="Bruce D."/>
            <person name="Detter J.C."/>
            <person name="Han C."/>
            <person name="Schmutz J."/>
            <person name="Larimer F."/>
            <person name="Land M."/>
            <person name="Hauser L."/>
            <person name="Kyrpides N."/>
            <person name="Kim E."/>
            <person name="Zhao J.-S."/>
            <person name="Richardson P."/>
        </authorList>
    </citation>
    <scope>NUCLEOTIDE SEQUENCE [LARGE SCALE GENOMIC DNA]</scope>
    <source>
        <strain>HAW-EB3</strain>
    </source>
</reference>
<sequence>MTAQRIDGKAIAQSIRTQLKEKVTARKEAGQRVPGLAVILVGADPASQVYVGSKRRACEEVGFLSRSYDLDTTTSEAELLTLIDECNEDPAIDGILVQLPLPEHIEESKVIERIRPDKDVDGFHPYNVGRLAQRIPVLRSCTPMGIMTLIKTTGIDTYGLDAVIVGASNIVGRPMSLELLLAGCTTTTCHRFTRNLEQKVRQADLLVVAVGKPGFIPGEWIKPGAIVIDVGINRLEDGSLAGDVQFDAASENASFITPVPGGVGPMTIASLLENTLYAAEQYHD</sequence>
<comment type="function">
    <text evidence="1">Catalyzes the oxidation of 5,10-methylenetetrahydrofolate to 5,10-methenyltetrahydrofolate and then the hydrolysis of 5,10-methenyltetrahydrofolate to 10-formyltetrahydrofolate.</text>
</comment>
<comment type="catalytic activity">
    <reaction evidence="1">
        <text>(6R)-5,10-methylene-5,6,7,8-tetrahydrofolate + NADP(+) = (6R)-5,10-methenyltetrahydrofolate + NADPH</text>
        <dbReference type="Rhea" id="RHEA:22812"/>
        <dbReference type="ChEBI" id="CHEBI:15636"/>
        <dbReference type="ChEBI" id="CHEBI:57455"/>
        <dbReference type="ChEBI" id="CHEBI:57783"/>
        <dbReference type="ChEBI" id="CHEBI:58349"/>
        <dbReference type="EC" id="1.5.1.5"/>
    </reaction>
</comment>
<comment type="catalytic activity">
    <reaction evidence="1">
        <text>(6R)-5,10-methenyltetrahydrofolate + H2O = (6R)-10-formyltetrahydrofolate + H(+)</text>
        <dbReference type="Rhea" id="RHEA:23700"/>
        <dbReference type="ChEBI" id="CHEBI:15377"/>
        <dbReference type="ChEBI" id="CHEBI:15378"/>
        <dbReference type="ChEBI" id="CHEBI:57455"/>
        <dbReference type="ChEBI" id="CHEBI:195366"/>
        <dbReference type="EC" id="3.5.4.9"/>
    </reaction>
</comment>
<comment type="pathway">
    <text evidence="1">One-carbon metabolism; tetrahydrofolate interconversion.</text>
</comment>
<comment type="subunit">
    <text evidence="1">Homodimer.</text>
</comment>
<comment type="similarity">
    <text evidence="1">Belongs to the tetrahydrofolate dehydrogenase/cyclohydrolase family.</text>
</comment>
<protein>
    <recommendedName>
        <fullName evidence="1">Bifunctional protein FolD</fullName>
    </recommendedName>
    <domain>
        <recommendedName>
            <fullName evidence="1">Methylenetetrahydrofolate dehydrogenase</fullName>
            <ecNumber evidence="1">1.5.1.5</ecNumber>
        </recommendedName>
    </domain>
    <domain>
        <recommendedName>
            <fullName evidence="1">Methenyltetrahydrofolate cyclohydrolase</fullName>
            <ecNumber evidence="1">3.5.4.9</ecNumber>
        </recommendedName>
    </domain>
</protein>
<gene>
    <name evidence="1" type="primary">folD</name>
    <name type="ordered locus">Ssed_1539</name>
</gene>